<evidence type="ECO:0000250" key="1">
    <source>
        <dbReference type="UniProtKB" id="Q03023"/>
    </source>
</evidence>
<evidence type="ECO:0000255" key="2"/>
<evidence type="ECO:0000255" key="3">
    <source>
        <dbReference type="PROSITE-ProRule" id="PRU10095"/>
    </source>
</evidence>
<evidence type="ECO:0000269" key="4">
    <source ref="1"/>
</evidence>
<evidence type="ECO:0000303" key="5">
    <source ref="1"/>
</evidence>
<evidence type="ECO:0000305" key="6"/>
<evidence type="ECO:0000305" key="7">
    <source ref="1"/>
</evidence>
<accession>A0A0C5CJR8</accession>
<protein>
    <recommendedName>
        <fullName evidence="7">Metallopeptidase AprA</fullName>
        <ecNumber evidence="4">3.4.24.-</ecNumber>
    </recommendedName>
    <alternativeName>
        <fullName evidence="5">Heat-resistant peptidase</fullName>
    </alternativeName>
</protein>
<gene>
    <name evidence="5" type="primary">aprA</name>
</gene>
<comment type="function">
    <text evidence="4">Peptidase able to cleave azocasein and the milk substrates beta-casein and Na-caseinate. Can withstand UHT processing of milk, and is able to spoil UHT milk over the storage period.</text>
</comment>
<comment type="cofactor">
    <cofactor evidence="1">
        <name>Ca(2+)</name>
        <dbReference type="ChEBI" id="CHEBI:29108"/>
    </cofactor>
    <text evidence="1">Binds 8 Ca(2+) ions per subunit.</text>
</comment>
<comment type="cofactor">
    <cofactor evidence="1">
        <name>Zn(2+)</name>
        <dbReference type="ChEBI" id="CHEBI:29105"/>
    </cofactor>
    <text evidence="1">Binds 1 zinc ion per subunit.</text>
</comment>
<comment type="activity regulation">
    <text evidence="4">Is completely inhibited by the metal cation chelators 1,10-phenanthroline and EDTA, but PMSF, pepstatin A and E-64 have no effect on activity.</text>
</comment>
<comment type="biophysicochemical properties">
    <phDependence>
        <text evidence="4">Optimum pH is 8.</text>
    </phDependence>
    <temperatureDependence>
        <text evidence="4">Optimum temperature is 40 degrees Celsius. At higher temperatures, the activity decreases rapidly. Shows high enzyme activity with casein as a substrate under the storage conditions of UHT milk. Is highly thermostable. Withstands general ultra-high temperature (UHT) processing (138 degrees Celsius for 18 seconds) in skim milk, with 88% of the initial enzyme activity remaining after heating. The milk matrix has a protective effect on the enzyme activity during the thermal process.</text>
    </temperatureDependence>
</comment>
<comment type="subcellular location">
    <subcellularLocation>
        <location evidence="4">Secreted</location>
    </subcellularLocation>
</comment>
<comment type="similarity">
    <text evidence="6">Belongs to the peptidase M10B family.</text>
</comment>
<proteinExistence type="evidence at protein level"/>
<organism>
    <name type="scientific">Pseudomonas marginalis</name>
    <name type="common">Pseudomonas panacis</name>
    <dbReference type="NCBI Taxonomy" id="298"/>
    <lineage>
        <taxon>Bacteria</taxon>
        <taxon>Pseudomonadati</taxon>
        <taxon>Pseudomonadota</taxon>
        <taxon>Gammaproteobacteria</taxon>
        <taxon>Pseudomonadales</taxon>
        <taxon>Pseudomonadaceae</taxon>
        <taxon>Pseudomonas</taxon>
    </lineage>
</organism>
<keyword id="KW-0106">Calcium</keyword>
<keyword id="KW-0378">Hydrolase</keyword>
<keyword id="KW-0479">Metal-binding</keyword>
<keyword id="KW-0482">Metalloprotease</keyword>
<keyword id="KW-0645">Protease</keyword>
<keyword id="KW-0677">Repeat</keyword>
<keyword id="KW-0964">Secreted</keyword>
<keyword id="KW-0732">Signal</keyword>
<keyword id="KW-0862">Zinc</keyword>
<reference key="1">
    <citation type="journal article" date="2015" name="Int. Dairy J.">
        <title>Isolation and characterization of a heat-resistant peptidase from Pseudomonas panacis withstanding general UHT processes.</title>
        <authorList>
            <person name="Baur C."/>
            <person name="Krewinkel M."/>
            <person name="Kutzli I."/>
            <person name="Kranz B."/>
            <person name="von Neubeck M."/>
            <person name="Huptas C."/>
            <person name="Wenning M."/>
            <person name="Scherer S."/>
            <person name="Stoeckel M."/>
            <person name="Hinrichs J."/>
            <person name="Stressler T."/>
            <person name="Fischer L."/>
        </authorList>
    </citation>
    <scope>NUCLEOTIDE SEQUENCE [GENOMIC DNA]</scope>
    <scope>FUNCTION</scope>
    <scope>CATALYTIC ACTIVITY</scope>
    <scope>BIOPHYSICOCHEMICAL PROPERTIES</scope>
    <scope>ACTIVITY REGULATION</scope>
    <scope>SUBCELLULAR LOCATION</scope>
    <scope>IDENTIFICATION BY MASS SPECTROMETRY</scope>
    <source>
        <strain>WS4668</strain>
    </source>
</reference>
<name>APRA_PSEMA</name>
<dbReference type="EC" id="3.4.24.-" evidence="4"/>
<dbReference type="EMBL" id="KP203865">
    <property type="protein sequence ID" value="AJO27033.1"/>
    <property type="molecule type" value="Genomic_DNA"/>
</dbReference>
<dbReference type="RefSeq" id="WP_146476416.1">
    <property type="nucleotide sequence ID" value="NZ_JAARME010000002.1"/>
</dbReference>
<dbReference type="SMR" id="A0A0C5CJR8"/>
<dbReference type="MEROPS" id="M10.060"/>
<dbReference type="GO" id="GO:0031012">
    <property type="term" value="C:extracellular matrix"/>
    <property type="evidence" value="ECO:0007669"/>
    <property type="project" value="InterPro"/>
</dbReference>
<dbReference type="GO" id="GO:0005615">
    <property type="term" value="C:extracellular space"/>
    <property type="evidence" value="ECO:0000314"/>
    <property type="project" value="UniProtKB"/>
</dbReference>
<dbReference type="GO" id="GO:0005509">
    <property type="term" value="F:calcium ion binding"/>
    <property type="evidence" value="ECO:0007669"/>
    <property type="project" value="InterPro"/>
</dbReference>
<dbReference type="GO" id="GO:0004222">
    <property type="term" value="F:metalloendopeptidase activity"/>
    <property type="evidence" value="ECO:0007669"/>
    <property type="project" value="InterPro"/>
</dbReference>
<dbReference type="GO" id="GO:0008237">
    <property type="term" value="F:metallopeptidase activity"/>
    <property type="evidence" value="ECO:0000314"/>
    <property type="project" value="UniProtKB"/>
</dbReference>
<dbReference type="GO" id="GO:0008270">
    <property type="term" value="F:zinc ion binding"/>
    <property type="evidence" value="ECO:0007669"/>
    <property type="project" value="InterPro"/>
</dbReference>
<dbReference type="GO" id="GO:0030574">
    <property type="term" value="P:collagen catabolic process"/>
    <property type="evidence" value="ECO:0007669"/>
    <property type="project" value="TreeGrafter"/>
</dbReference>
<dbReference type="GO" id="GO:0030198">
    <property type="term" value="P:extracellular matrix organization"/>
    <property type="evidence" value="ECO:0007669"/>
    <property type="project" value="TreeGrafter"/>
</dbReference>
<dbReference type="GO" id="GO:0030163">
    <property type="term" value="P:protein catabolic process"/>
    <property type="evidence" value="ECO:0000314"/>
    <property type="project" value="UniProtKB"/>
</dbReference>
<dbReference type="GO" id="GO:0006508">
    <property type="term" value="P:proteolysis"/>
    <property type="evidence" value="ECO:0007669"/>
    <property type="project" value="UniProtKB-KW"/>
</dbReference>
<dbReference type="CDD" id="cd04277">
    <property type="entry name" value="ZnMc_serralysin_like"/>
    <property type="match status" value="1"/>
</dbReference>
<dbReference type="FunFam" id="3.40.390.10:FF:000046">
    <property type="entry name" value="Serralysin"/>
    <property type="match status" value="1"/>
</dbReference>
<dbReference type="Gene3D" id="3.40.390.10">
    <property type="entry name" value="Collagenase (Catalytic Domain)"/>
    <property type="match status" value="1"/>
</dbReference>
<dbReference type="Gene3D" id="2.150.10.10">
    <property type="entry name" value="Serralysin-like metalloprotease, C-terminal"/>
    <property type="match status" value="1"/>
</dbReference>
<dbReference type="InterPro" id="IPR018511">
    <property type="entry name" value="Hemolysin-typ_Ca-bd_CS"/>
</dbReference>
<dbReference type="InterPro" id="IPR001343">
    <property type="entry name" value="Hemolysn_Ca-bd"/>
</dbReference>
<dbReference type="InterPro" id="IPR024079">
    <property type="entry name" value="MetalloPept_cat_dom_sf"/>
</dbReference>
<dbReference type="InterPro" id="IPR001818">
    <property type="entry name" value="Pept_M10_metallopeptidase"/>
</dbReference>
<dbReference type="InterPro" id="IPR016294">
    <property type="entry name" value="Pept_M10B"/>
</dbReference>
<dbReference type="InterPro" id="IPR013858">
    <property type="entry name" value="Peptidase_M10B_C"/>
</dbReference>
<dbReference type="InterPro" id="IPR006026">
    <property type="entry name" value="Peptidase_Metallo"/>
</dbReference>
<dbReference type="InterPro" id="IPR034033">
    <property type="entry name" value="Serralysin-like"/>
</dbReference>
<dbReference type="InterPro" id="IPR011049">
    <property type="entry name" value="Serralysin-like_metalloprot_C"/>
</dbReference>
<dbReference type="NCBIfam" id="NF035945">
    <property type="entry name" value="Zn_serralysin"/>
    <property type="match status" value="1"/>
</dbReference>
<dbReference type="PANTHER" id="PTHR10201">
    <property type="entry name" value="MATRIX METALLOPROTEINASE"/>
    <property type="match status" value="1"/>
</dbReference>
<dbReference type="PANTHER" id="PTHR10201:SF323">
    <property type="entry name" value="MATRIX METALLOPROTEINASE-21"/>
    <property type="match status" value="1"/>
</dbReference>
<dbReference type="Pfam" id="PF00353">
    <property type="entry name" value="HemolysinCabind"/>
    <property type="match status" value="1"/>
</dbReference>
<dbReference type="Pfam" id="PF00413">
    <property type="entry name" value="Peptidase_M10"/>
    <property type="match status" value="1"/>
</dbReference>
<dbReference type="Pfam" id="PF08548">
    <property type="entry name" value="Peptidase_M10_C"/>
    <property type="match status" value="1"/>
</dbReference>
<dbReference type="PIRSF" id="PIRSF001205">
    <property type="entry name" value="Peptidase_M10B"/>
    <property type="match status" value="1"/>
</dbReference>
<dbReference type="PRINTS" id="PR00313">
    <property type="entry name" value="CABNDNGRPT"/>
</dbReference>
<dbReference type="SMART" id="SM00235">
    <property type="entry name" value="ZnMc"/>
    <property type="match status" value="1"/>
</dbReference>
<dbReference type="SUPFAM" id="SSF51120">
    <property type="entry name" value="beta-Roll"/>
    <property type="match status" value="1"/>
</dbReference>
<dbReference type="SUPFAM" id="SSF55486">
    <property type="entry name" value="Metalloproteases ('zincins'), catalytic domain"/>
    <property type="match status" value="1"/>
</dbReference>
<dbReference type="PROSITE" id="PS00330">
    <property type="entry name" value="HEMOLYSIN_CALCIUM"/>
    <property type="match status" value="1"/>
</dbReference>
<dbReference type="PROSITE" id="PS00142">
    <property type="entry name" value="ZINC_PROTEASE"/>
    <property type="match status" value="1"/>
</dbReference>
<feature type="signal peptide" evidence="2">
    <location>
        <begin position="1"/>
        <end position="20"/>
    </location>
</feature>
<feature type="chain" id="PRO_0000433639" description="Metallopeptidase AprA">
    <location>
        <begin position="21"/>
        <end position="477"/>
    </location>
</feature>
<feature type="repeat" description="Hemolysin-type calcium-binding 1" evidence="6">
    <location>
        <begin position="343"/>
        <end position="360"/>
    </location>
</feature>
<feature type="repeat" description="Hemolysin-type calcium-binding 2" evidence="6">
    <location>
        <begin position="361"/>
        <end position="378"/>
    </location>
</feature>
<feature type="repeat" description="Hemolysin-type calcium-binding 3" evidence="6">
    <location>
        <begin position="379"/>
        <end position="391"/>
    </location>
</feature>
<feature type="active site" evidence="3">
    <location>
        <position position="184"/>
    </location>
</feature>
<feature type="binding site" evidence="1">
    <location>
        <position position="183"/>
    </location>
    <ligand>
        <name>Zn(2+)</name>
        <dbReference type="ChEBI" id="CHEBI:29105"/>
        <note>catalytic</note>
    </ligand>
</feature>
<feature type="binding site" evidence="1">
    <location>
        <position position="187"/>
    </location>
    <ligand>
        <name>Zn(2+)</name>
        <dbReference type="ChEBI" id="CHEBI:29105"/>
        <note>catalytic</note>
    </ligand>
</feature>
<feature type="binding site" evidence="1">
    <location>
        <position position="193"/>
    </location>
    <ligand>
        <name>Zn(2+)</name>
        <dbReference type="ChEBI" id="CHEBI:29105"/>
        <note>catalytic</note>
    </ligand>
</feature>
<feature type="binding site" evidence="1">
    <location>
        <position position="264"/>
    </location>
    <ligand>
        <name>Ca(2+)</name>
        <dbReference type="ChEBI" id="CHEBI:29108"/>
        <label>1</label>
    </ligand>
</feature>
<feature type="binding site" evidence="1">
    <location>
        <position position="266"/>
    </location>
    <ligand>
        <name>Ca(2+)</name>
        <dbReference type="ChEBI" id="CHEBI:29108"/>
        <label>1</label>
    </ligand>
</feature>
<feature type="binding site" evidence="1">
    <location>
        <position position="268"/>
    </location>
    <ligand>
        <name>Ca(2+)</name>
        <dbReference type="ChEBI" id="CHEBI:29108"/>
        <label>1</label>
    </ligand>
</feature>
<feature type="binding site" evidence="1">
    <location>
        <position position="296"/>
    </location>
    <ligand>
        <name>Ca(2+)</name>
        <dbReference type="ChEBI" id="CHEBI:29108"/>
        <label>1</label>
    </ligand>
</feature>
<feature type="binding site" evidence="1">
    <location>
        <position position="298"/>
    </location>
    <ligand>
        <name>Ca(2+)</name>
        <dbReference type="ChEBI" id="CHEBI:29108"/>
        <label>1</label>
    </ligand>
</feature>
<feature type="binding site" evidence="1">
    <location>
        <position position="299"/>
    </location>
    <ligand>
        <name>Ca(2+)</name>
        <dbReference type="ChEBI" id="CHEBI:29108"/>
        <label>2</label>
    </ligand>
</feature>
<feature type="binding site" evidence="1">
    <location>
        <position position="301"/>
    </location>
    <ligand>
        <name>Ca(2+)</name>
        <dbReference type="ChEBI" id="CHEBI:29108"/>
        <label>1</label>
    </ligand>
</feature>
<feature type="binding site" evidence="1">
    <location>
        <position position="301"/>
    </location>
    <ligand>
        <name>Ca(2+)</name>
        <dbReference type="ChEBI" id="CHEBI:29108"/>
        <label>2</label>
    </ligand>
</feature>
<feature type="binding site" evidence="1">
    <location>
        <position position="338"/>
    </location>
    <ligand>
        <name>Ca(2+)</name>
        <dbReference type="ChEBI" id="CHEBI:29108"/>
        <label>2</label>
    </ligand>
</feature>
<feature type="binding site" evidence="1">
    <location>
        <position position="340"/>
    </location>
    <ligand>
        <name>Ca(2+)</name>
        <dbReference type="ChEBI" id="CHEBI:29108"/>
        <label>2</label>
    </ligand>
</feature>
<feature type="binding site" evidence="1">
    <location>
        <position position="345"/>
    </location>
    <ligand>
        <name>Ca(2+)</name>
        <dbReference type="ChEBI" id="CHEBI:29108"/>
        <label>3</label>
    </ligand>
</feature>
<feature type="binding site" evidence="1">
    <location>
        <position position="347"/>
    </location>
    <ligand>
        <name>Ca(2+)</name>
        <dbReference type="ChEBI" id="CHEBI:29108"/>
        <label>3</label>
    </ligand>
</feature>
<feature type="binding site" evidence="1">
    <location>
        <position position="349"/>
    </location>
    <ligand>
        <name>Ca(2+)</name>
        <dbReference type="ChEBI" id="CHEBI:29108"/>
        <label>3</label>
    </ligand>
</feature>
<feature type="binding site" evidence="1">
    <location>
        <position position="354"/>
    </location>
    <ligand>
        <name>Ca(2+)</name>
        <dbReference type="ChEBI" id="CHEBI:29108"/>
        <label>4</label>
    </ligand>
</feature>
<feature type="binding site" evidence="1">
    <location>
        <position position="356"/>
    </location>
    <ligand>
        <name>Ca(2+)</name>
        <dbReference type="ChEBI" id="CHEBI:29108"/>
        <label>4</label>
    </ligand>
</feature>
<feature type="binding site" evidence="1">
    <location>
        <position position="358"/>
    </location>
    <ligand>
        <name>Ca(2+)</name>
        <dbReference type="ChEBI" id="CHEBI:29108"/>
        <label>4</label>
    </ligand>
</feature>
<feature type="binding site" evidence="1">
    <location>
        <position position="362"/>
    </location>
    <ligand>
        <name>Ca(2+)</name>
        <dbReference type="ChEBI" id="CHEBI:29108"/>
        <label>3</label>
    </ligand>
</feature>
<feature type="binding site" evidence="1">
    <location>
        <position position="363"/>
    </location>
    <ligand>
        <name>Ca(2+)</name>
        <dbReference type="ChEBI" id="CHEBI:29108"/>
        <label>5</label>
    </ligand>
</feature>
<feature type="binding site" evidence="1">
    <location>
        <position position="364"/>
    </location>
    <ligand>
        <name>Ca(2+)</name>
        <dbReference type="ChEBI" id="CHEBI:29108"/>
        <label>3</label>
    </ligand>
</feature>
<feature type="binding site" evidence="1">
    <location>
        <position position="365"/>
    </location>
    <ligand>
        <name>Ca(2+)</name>
        <dbReference type="ChEBI" id="CHEBI:29108"/>
        <label>5</label>
    </ligand>
</feature>
<feature type="binding site" evidence="1">
    <location>
        <position position="367"/>
    </location>
    <ligand>
        <name>Ca(2+)</name>
        <dbReference type="ChEBI" id="CHEBI:29108"/>
        <label>3</label>
    </ligand>
</feature>
<feature type="binding site" evidence="1">
    <location>
        <position position="367"/>
    </location>
    <ligand>
        <name>Ca(2+)</name>
        <dbReference type="ChEBI" id="CHEBI:29108"/>
        <label>5</label>
    </ligand>
</feature>
<feature type="binding site" evidence="1">
    <location>
        <position position="371"/>
    </location>
    <ligand>
        <name>Ca(2+)</name>
        <dbReference type="ChEBI" id="CHEBI:29108"/>
        <label>4</label>
    </ligand>
</feature>
<feature type="binding site" evidence="1">
    <location>
        <position position="372"/>
    </location>
    <ligand>
        <name>Ca(2+)</name>
        <dbReference type="ChEBI" id="CHEBI:29108"/>
        <label>6</label>
    </ligand>
</feature>
<feature type="binding site" evidence="1">
    <location>
        <position position="373"/>
    </location>
    <ligand>
        <name>Ca(2+)</name>
        <dbReference type="ChEBI" id="CHEBI:29108"/>
        <label>4</label>
    </ligand>
</feature>
<feature type="binding site" evidence="1">
    <location>
        <position position="374"/>
    </location>
    <ligand>
        <name>Ca(2+)</name>
        <dbReference type="ChEBI" id="CHEBI:29108"/>
        <label>6</label>
    </ligand>
</feature>
<feature type="binding site" evidence="1">
    <location>
        <position position="376"/>
    </location>
    <ligand>
        <name>Ca(2+)</name>
        <dbReference type="ChEBI" id="CHEBI:29108"/>
        <label>4</label>
    </ligand>
</feature>
<feature type="binding site" evidence="1">
    <location>
        <position position="376"/>
    </location>
    <ligand>
        <name>Ca(2+)</name>
        <dbReference type="ChEBI" id="CHEBI:29108"/>
        <label>6</label>
    </ligand>
</feature>
<feature type="binding site" evidence="1">
    <location>
        <position position="380"/>
    </location>
    <ligand>
        <name>Ca(2+)</name>
        <dbReference type="ChEBI" id="CHEBI:29108"/>
        <label>5</label>
    </ligand>
</feature>
<feature type="binding site" evidence="1">
    <location>
        <position position="381"/>
    </location>
    <ligand>
        <name>Ca(2+)</name>
        <dbReference type="ChEBI" id="CHEBI:29108"/>
        <label>7</label>
    </ligand>
</feature>
<feature type="binding site" evidence="1">
    <location>
        <position position="382"/>
    </location>
    <ligand>
        <name>Ca(2+)</name>
        <dbReference type="ChEBI" id="CHEBI:29108"/>
        <label>5</label>
    </ligand>
</feature>
<feature type="binding site" evidence="1">
    <location>
        <position position="383"/>
    </location>
    <ligand>
        <name>Ca(2+)</name>
        <dbReference type="ChEBI" id="CHEBI:29108"/>
        <label>7</label>
    </ligand>
</feature>
<feature type="binding site" evidence="1">
    <location>
        <position position="385"/>
    </location>
    <ligand>
        <name>Ca(2+)</name>
        <dbReference type="ChEBI" id="CHEBI:29108"/>
        <label>5</label>
    </ligand>
</feature>
<feature type="binding site" evidence="1">
    <location>
        <position position="385"/>
    </location>
    <ligand>
        <name>Ca(2+)</name>
        <dbReference type="ChEBI" id="CHEBI:29108"/>
        <label>7</label>
    </ligand>
</feature>
<feature type="binding site" evidence="1">
    <location>
        <position position="394"/>
    </location>
    <ligand>
        <name>Ca(2+)</name>
        <dbReference type="ChEBI" id="CHEBI:29108"/>
        <label>6</label>
    </ligand>
</feature>
<feature type="binding site" evidence="1">
    <location>
        <position position="401"/>
    </location>
    <ligand>
        <name>Ca(2+)</name>
        <dbReference type="ChEBI" id="CHEBI:29108"/>
        <label>6</label>
    </ligand>
</feature>
<feature type="binding site" evidence="1">
    <location>
        <position position="411"/>
    </location>
    <ligand>
        <name>Ca(2+)</name>
        <dbReference type="ChEBI" id="CHEBI:29108"/>
        <label>7</label>
    </ligand>
</feature>
<feature type="binding site" evidence="1">
    <location>
        <position position="453"/>
    </location>
    <ligand>
        <name>Ca(2+)</name>
        <dbReference type="ChEBI" id="CHEBI:29108"/>
        <label>8</label>
    </ligand>
</feature>
<feature type="binding site" evidence="1">
    <location>
        <position position="455"/>
    </location>
    <ligand>
        <name>Ca(2+)</name>
        <dbReference type="ChEBI" id="CHEBI:29108"/>
        <label>8</label>
    </ligand>
</feature>
<feature type="binding site" evidence="1">
    <location>
        <position position="461"/>
    </location>
    <ligand>
        <name>Ca(2+)</name>
        <dbReference type="ChEBI" id="CHEBI:29108"/>
        <label>8</label>
    </ligand>
</feature>
<sequence>MSKAKDKAIVSAAQASTAYSQIDSFSHLYDRGGNLTINGKPSYTVDQAATQLLRDGAAYRDFDGNGKIDLTYTFLTSASSSTMNKHGISGFSQFNAQQKAQAALAMQSWSDVANVTFTEKASGGDGHMTFGNYSSGQDGAAAFAYLPGTGAGYDGTSWYLTNNSYTPNKTPDLNNYGRQTLTHEIGHTLGLAHPGDYNAGEGAPTYNDATYGQDTRGYSLMSYWSESNTNQNFSKGGVEAYASGPLIDDIAAIQKLYGANYNTRAGDTTYGFNSNTGRDFLSATSNADKLVFSVWDGGGNDTLDFSGFTQNQKINLNEASFSDVGGLVGNVSIAKGVTIENAFGGAGNDLIIGNNAANVIKGGAGNDLIYGAGGADQLWGGAGNDTFVFGASSDSKPGAADKIFDFTSGSDKIDLSGITKGAGLTFVNAFTGHAGDAVLTYAAGTNLGTLAVDFSGHGVADFLVTTVGQAAVSDIVA</sequence>